<comment type="function">
    <text evidence="1">The RuvA-RuvB-RuvC complex processes Holliday junction (HJ) DNA during genetic recombination and DNA repair, while the RuvA-RuvB complex plays an important role in the rescue of blocked DNA replication forks via replication fork reversal (RFR). RuvA specifically binds to HJ cruciform DNA, conferring on it an open structure. The RuvB hexamer acts as an ATP-dependent pump, pulling dsDNA into and through the RuvAB complex. RuvB forms 2 homohexamers on either side of HJ DNA bound by 1 or 2 RuvA tetramers; 4 subunits per hexamer contact DNA at a time. Coordinated motions by a converter formed by DNA-disengaged RuvB subunits stimulates ATP hydrolysis and nucleotide exchange. Immobilization of the converter enables RuvB to convert the ATP-contained energy into a lever motion, pulling 2 nucleotides of DNA out of the RuvA tetramer per ATP hydrolyzed, thus driving DNA branch migration. The RuvB motors rotate together with the DNA substrate, which together with the progressing nucleotide cycle form the mechanistic basis for DNA recombination by continuous HJ branch migration. Branch migration allows RuvC to scan DNA until it finds its consensus sequence, where it cleaves and resolves cruciform DNA.</text>
</comment>
<comment type="catalytic activity">
    <reaction evidence="1">
        <text>ATP + H2O = ADP + phosphate + H(+)</text>
        <dbReference type="Rhea" id="RHEA:13065"/>
        <dbReference type="ChEBI" id="CHEBI:15377"/>
        <dbReference type="ChEBI" id="CHEBI:15378"/>
        <dbReference type="ChEBI" id="CHEBI:30616"/>
        <dbReference type="ChEBI" id="CHEBI:43474"/>
        <dbReference type="ChEBI" id="CHEBI:456216"/>
    </reaction>
</comment>
<comment type="subunit">
    <text evidence="1">Homohexamer. Forms an RuvA(8)-RuvB(12)-Holliday junction (HJ) complex. HJ DNA is sandwiched between 2 RuvA tetramers; dsDNA enters through RuvA and exits via RuvB. An RuvB hexamer assembles on each DNA strand where it exits the tetramer. Each RuvB hexamer is contacted by two RuvA subunits (via domain III) on 2 adjacent RuvB subunits; this complex drives branch migration. In the full resolvosome a probable DNA-RuvA(4)-RuvB(12)-RuvC(2) complex forms which resolves the HJ.</text>
</comment>
<comment type="subcellular location">
    <subcellularLocation>
        <location evidence="1">Cytoplasm</location>
    </subcellularLocation>
</comment>
<comment type="domain">
    <text evidence="1">Has 3 domains, the large (RuvB-L) and small ATPase (RuvB-S) domains and the C-terminal head (RuvB-H) domain. The head domain binds DNA, while the ATPase domains jointly bind ATP, ADP or are empty depending on the state of the subunit in the translocation cycle. During a single DNA translocation step the structure of each domain remains the same, but their relative positions change.</text>
</comment>
<comment type="similarity">
    <text evidence="1">Belongs to the RuvB family.</text>
</comment>
<evidence type="ECO:0000255" key="1">
    <source>
        <dbReference type="HAMAP-Rule" id="MF_00016"/>
    </source>
</evidence>
<gene>
    <name evidence="1" type="primary">ruvB</name>
    <name type="ordered locus">HPAG1_0388</name>
</gene>
<dbReference type="EC" id="3.6.4.-" evidence="1"/>
<dbReference type="EMBL" id="CP000241">
    <property type="protein sequence ID" value="ABF84455.1"/>
    <property type="molecule type" value="Genomic_DNA"/>
</dbReference>
<dbReference type="RefSeq" id="WP_000664529.1">
    <property type="nucleotide sequence ID" value="NC_008086.1"/>
</dbReference>
<dbReference type="SMR" id="Q1CUB7"/>
<dbReference type="KEGG" id="hpa:HPAG1_0388"/>
<dbReference type="HOGENOM" id="CLU_055599_1_0_7"/>
<dbReference type="GO" id="GO:0005737">
    <property type="term" value="C:cytoplasm"/>
    <property type="evidence" value="ECO:0007669"/>
    <property type="project" value="UniProtKB-SubCell"/>
</dbReference>
<dbReference type="GO" id="GO:0048476">
    <property type="term" value="C:Holliday junction resolvase complex"/>
    <property type="evidence" value="ECO:0007669"/>
    <property type="project" value="UniProtKB-UniRule"/>
</dbReference>
<dbReference type="GO" id="GO:0005524">
    <property type="term" value="F:ATP binding"/>
    <property type="evidence" value="ECO:0007669"/>
    <property type="project" value="UniProtKB-UniRule"/>
</dbReference>
<dbReference type="GO" id="GO:0016887">
    <property type="term" value="F:ATP hydrolysis activity"/>
    <property type="evidence" value="ECO:0007669"/>
    <property type="project" value="InterPro"/>
</dbReference>
<dbReference type="GO" id="GO:0000400">
    <property type="term" value="F:four-way junction DNA binding"/>
    <property type="evidence" value="ECO:0007669"/>
    <property type="project" value="UniProtKB-UniRule"/>
</dbReference>
<dbReference type="GO" id="GO:0009378">
    <property type="term" value="F:four-way junction helicase activity"/>
    <property type="evidence" value="ECO:0007669"/>
    <property type="project" value="InterPro"/>
</dbReference>
<dbReference type="GO" id="GO:0006310">
    <property type="term" value="P:DNA recombination"/>
    <property type="evidence" value="ECO:0007669"/>
    <property type="project" value="UniProtKB-UniRule"/>
</dbReference>
<dbReference type="GO" id="GO:0006281">
    <property type="term" value="P:DNA repair"/>
    <property type="evidence" value="ECO:0007669"/>
    <property type="project" value="UniProtKB-UniRule"/>
</dbReference>
<dbReference type="CDD" id="cd00009">
    <property type="entry name" value="AAA"/>
    <property type="match status" value="1"/>
</dbReference>
<dbReference type="Gene3D" id="1.10.8.60">
    <property type="match status" value="1"/>
</dbReference>
<dbReference type="Gene3D" id="3.40.50.300">
    <property type="entry name" value="P-loop containing nucleotide triphosphate hydrolases"/>
    <property type="match status" value="1"/>
</dbReference>
<dbReference type="Gene3D" id="1.10.10.10">
    <property type="entry name" value="Winged helix-like DNA-binding domain superfamily/Winged helix DNA-binding domain"/>
    <property type="match status" value="1"/>
</dbReference>
<dbReference type="HAMAP" id="MF_00016">
    <property type="entry name" value="DNA_HJ_migration_RuvB"/>
    <property type="match status" value="1"/>
</dbReference>
<dbReference type="InterPro" id="IPR003593">
    <property type="entry name" value="AAA+_ATPase"/>
</dbReference>
<dbReference type="InterPro" id="IPR041445">
    <property type="entry name" value="AAA_lid_4"/>
</dbReference>
<dbReference type="InterPro" id="IPR004605">
    <property type="entry name" value="DNA_helicase_Holl-junc_RuvB"/>
</dbReference>
<dbReference type="InterPro" id="IPR027417">
    <property type="entry name" value="P-loop_NTPase"/>
</dbReference>
<dbReference type="InterPro" id="IPR008824">
    <property type="entry name" value="RuvB-like_N"/>
</dbReference>
<dbReference type="InterPro" id="IPR008823">
    <property type="entry name" value="RuvB_C"/>
</dbReference>
<dbReference type="InterPro" id="IPR036388">
    <property type="entry name" value="WH-like_DNA-bd_sf"/>
</dbReference>
<dbReference type="InterPro" id="IPR036390">
    <property type="entry name" value="WH_DNA-bd_sf"/>
</dbReference>
<dbReference type="NCBIfam" id="NF000868">
    <property type="entry name" value="PRK00080.1"/>
    <property type="match status" value="1"/>
</dbReference>
<dbReference type="NCBIfam" id="TIGR00635">
    <property type="entry name" value="ruvB"/>
    <property type="match status" value="1"/>
</dbReference>
<dbReference type="PANTHER" id="PTHR42848">
    <property type="match status" value="1"/>
</dbReference>
<dbReference type="PANTHER" id="PTHR42848:SF1">
    <property type="entry name" value="HOLLIDAY JUNCTION BRANCH MIGRATION COMPLEX SUBUNIT RUVB"/>
    <property type="match status" value="1"/>
</dbReference>
<dbReference type="Pfam" id="PF17864">
    <property type="entry name" value="AAA_lid_4"/>
    <property type="match status" value="1"/>
</dbReference>
<dbReference type="Pfam" id="PF05491">
    <property type="entry name" value="RuvB_C"/>
    <property type="match status" value="1"/>
</dbReference>
<dbReference type="Pfam" id="PF05496">
    <property type="entry name" value="RuvB_N"/>
    <property type="match status" value="1"/>
</dbReference>
<dbReference type="SMART" id="SM00382">
    <property type="entry name" value="AAA"/>
    <property type="match status" value="1"/>
</dbReference>
<dbReference type="SUPFAM" id="SSF52540">
    <property type="entry name" value="P-loop containing nucleoside triphosphate hydrolases"/>
    <property type="match status" value="1"/>
</dbReference>
<dbReference type="SUPFAM" id="SSF46785">
    <property type="entry name" value="Winged helix' DNA-binding domain"/>
    <property type="match status" value="1"/>
</dbReference>
<accession>Q1CUB7</accession>
<reference key="1">
    <citation type="journal article" date="2006" name="Proc. Natl. Acad. Sci. U.S.A.">
        <title>The complete genome sequence of a chronic atrophic gastritis Helicobacter pylori strain: evolution during disease progression.</title>
        <authorList>
            <person name="Oh J.D."/>
            <person name="Kling-Baeckhed H."/>
            <person name="Giannakis M."/>
            <person name="Xu J."/>
            <person name="Fulton R.S."/>
            <person name="Fulton L.A."/>
            <person name="Cordum H.S."/>
            <person name="Wang C."/>
            <person name="Elliott G."/>
            <person name="Edwards J."/>
            <person name="Mardis E.R."/>
            <person name="Engstrand L.G."/>
            <person name="Gordon J.I."/>
        </authorList>
    </citation>
    <scope>NUCLEOTIDE SEQUENCE [LARGE SCALE GENOMIC DNA]</scope>
    <source>
        <strain>HPAG1</strain>
    </source>
</reference>
<feature type="chain" id="PRO_1000001416" description="Holliday junction branch migration complex subunit RuvB">
    <location>
        <begin position="1"/>
        <end position="336"/>
    </location>
</feature>
<feature type="region of interest" description="Large ATPase domain (RuvB-L)" evidence="1">
    <location>
        <begin position="1"/>
        <end position="182"/>
    </location>
</feature>
<feature type="region of interest" description="Small ATPAse domain (RuvB-S)" evidence="1">
    <location>
        <begin position="183"/>
        <end position="253"/>
    </location>
</feature>
<feature type="region of interest" description="Head domain (RuvB-H)" evidence="1">
    <location>
        <begin position="256"/>
        <end position="336"/>
    </location>
</feature>
<feature type="binding site" evidence="1">
    <location>
        <position position="21"/>
    </location>
    <ligand>
        <name>ATP</name>
        <dbReference type="ChEBI" id="CHEBI:30616"/>
    </ligand>
</feature>
<feature type="binding site" evidence="1">
    <location>
        <position position="22"/>
    </location>
    <ligand>
        <name>ATP</name>
        <dbReference type="ChEBI" id="CHEBI:30616"/>
    </ligand>
</feature>
<feature type="binding site" evidence="1">
    <location>
        <position position="63"/>
    </location>
    <ligand>
        <name>ATP</name>
        <dbReference type="ChEBI" id="CHEBI:30616"/>
    </ligand>
</feature>
<feature type="binding site" evidence="1">
    <location>
        <position position="66"/>
    </location>
    <ligand>
        <name>ATP</name>
        <dbReference type="ChEBI" id="CHEBI:30616"/>
    </ligand>
</feature>
<feature type="binding site" evidence="1">
    <location>
        <position position="67"/>
    </location>
    <ligand>
        <name>ATP</name>
        <dbReference type="ChEBI" id="CHEBI:30616"/>
    </ligand>
</feature>
<feature type="binding site" evidence="1">
    <location>
        <position position="67"/>
    </location>
    <ligand>
        <name>Mg(2+)</name>
        <dbReference type="ChEBI" id="CHEBI:18420"/>
    </ligand>
</feature>
<feature type="binding site" evidence="1">
    <location>
        <position position="68"/>
    </location>
    <ligand>
        <name>ATP</name>
        <dbReference type="ChEBI" id="CHEBI:30616"/>
    </ligand>
</feature>
<feature type="binding site" evidence="1">
    <location>
        <begin position="129"/>
        <end position="131"/>
    </location>
    <ligand>
        <name>ATP</name>
        <dbReference type="ChEBI" id="CHEBI:30616"/>
    </ligand>
</feature>
<feature type="binding site" evidence="1">
    <location>
        <position position="172"/>
    </location>
    <ligand>
        <name>ATP</name>
        <dbReference type="ChEBI" id="CHEBI:30616"/>
    </ligand>
</feature>
<feature type="binding site" evidence="1">
    <location>
        <position position="182"/>
    </location>
    <ligand>
        <name>ATP</name>
        <dbReference type="ChEBI" id="CHEBI:30616"/>
    </ligand>
</feature>
<feature type="binding site" evidence="1">
    <location>
        <position position="219"/>
    </location>
    <ligand>
        <name>ATP</name>
        <dbReference type="ChEBI" id="CHEBI:30616"/>
    </ligand>
</feature>
<feature type="binding site" evidence="1">
    <location>
        <position position="310"/>
    </location>
    <ligand>
        <name>DNA</name>
        <dbReference type="ChEBI" id="CHEBI:16991"/>
    </ligand>
</feature>
<feature type="binding site" evidence="1">
    <location>
        <position position="315"/>
    </location>
    <ligand>
        <name>DNA</name>
        <dbReference type="ChEBI" id="CHEBI:16991"/>
    </ligand>
</feature>
<organism>
    <name type="scientific">Helicobacter pylori (strain HPAG1)</name>
    <dbReference type="NCBI Taxonomy" id="357544"/>
    <lineage>
        <taxon>Bacteria</taxon>
        <taxon>Pseudomonadati</taxon>
        <taxon>Campylobacterota</taxon>
        <taxon>Epsilonproteobacteria</taxon>
        <taxon>Campylobacterales</taxon>
        <taxon>Helicobacteraceae</taxon>
        <taxon>Helicobacter</taxon>
    </lineage>
</organism>
<keyword id="KW-0067">ATP-binding</keyword>
<keyword id="KW-0963">Cytoplasm</keyword>
<keyword id="KW-0227">DNA damage</keyword>
<keyword id="KW-0233">DNA recombination</keyword>
<keyword id="KW-0234">DNA repair</keyword>
<keyword id="KW-0238">DNA-binding</keyword>
<keyword id="KW-0378">Hydrolase</keyword>
<keyword id="KW-0547">Nucleotide-binding</keyword>
<sequence length="336" mass="37310">MKERIVNLETLDFETSQEVSLRPSLWEDFIGQEKIKSNLQISICAAKKRQESLDHMLFFGPPGLGKTSISHIIAKEMETNIKITAAPMIEKSGDLAAILTNLQAKDILFIDEIHRLSPAIEEVLYPAMEDFRLDIIIGSGPAAQTIKIDLPPFTLIGATTRAGMLSNPLRDRFGMSFRMQFYSPSELALIIKKAAIKLNQDIKEESADEIAKRSRGTPRIALRLLKRVRDFALVKNSSLMDLNITLHALNELGVNELGFDEADLAYLSLLANAQGRPVGLNTIAASMREDEGTIEDVIEPFLLANGYLERTAKGRIATPKTHALLKIPTLKSQTLF</sequence>
<proteinExistence type="inferred from homology"/>
<protein>
    <recommendedName>
        <fullName evidence="1">Holliday junction branch migration complex subunit RuvB</fullName>
        <ecNumber evidence="1">3.6.4.-</ecNumber>
    </recommendedName>
</protein>
<name>RUVB_HELPH</name>